<accession>B8HUA6</accession>
<dbReference type="EMBL" id="CP001344">
    <property type="protein sequence ID" value="ACL44451.1"/>
    <property type="molecule type" value="Genomic_DNA"/>
</dbReference>
<dbReference type="SMR" id="B8HUA6"/>
<dbReference type="STRING" id="395961.Cyan7425_2088"/>
<dbReference type="KEGG" id="cyn:Cyan7425_2088"/>
<dbReference type="eggNOG" id="COG0779">
    <property type="taxonomic scope" value="Bacteria"/>
</dbReference>
<dbReference type="HOGENOM" id="CLU_070525_2_1_3"/>
<dbReference type="OrthoDB" id="9805006at2"/>
<dbReference type="GO" id="GO:0005829">
    <property type="term" value="C:cytosol"/>
    <property type="evidence" value="ECO:0007669"/>
    <property type="project" value="TreeGrafter"/>
</dbReference>
<dbReference type="GO" id="GO:0000028">
    <property type="term" value="P:ribosomal small subunit assembly"/>
    <property type="evidence" value="ECO:0007669"/>
    <property type="project" value="TreeGrafter"/>
</dbReference>
<dbReference type="GO" id="GO:0006412">
    <property type="term" value="P:translation"/>
    <property type="evidence" value="ECO:0007669"/>
    <property type="project" value="TreeGrafter"/>
</dbReference>
<dbReference type="CDD" id="cd01734">
    <property type="entry name" value="YlxS_C"/>
    <property type="match status" value="1"/>
</dbReference>
<dbReference type="Gene3D" id="3.30.300.70">
    <property type="entry name" value="RimP-like superfamily, N-terminal"/>
    <property type="match status" value="1"/>
</dbReference>
<dbReference type="HAMAP" id="MF_01077">
    <property type="entry name" value="RimP"/>
    <property type="match status" value="1"/>
</dbReference>
<dbReference type="InterPro" id="IPR003728">
    <property type="entry name" value="Ribosome_maturation_RimP"/>
</dbReference>
<dbReference type="InterPro" id="IPR028998">
    <property type="entry name" value="RimP_C"/>
</dbReference>
<dbReference type="InterPro" id="IPR036847">
    <property type="entry name" value="RimP_C_sf"/>
</dbReference>
<dbReference type="InterPro" id="IPR028989">
    <property type="entry name" value="RimP_N"/>
</dbReference>
<dbReference type="InterPro" id="IPR035956">
    <property type="entry name" value="RimP_N_sf"/>
</dbReference>
<dbReference type="NCBIfam" id="NF000935">
    <property type="entry name" value="PRK00092.3-3"/>
    <property type="match status" value="1"/>
</dbReference>
<dbReference type="PANTHER" id="PTHR33867">
    <property type="entry name" value="RIBOSOME MATURATION FACTOR RIMP"/>
    <property type="match status" value="1"/>
</dbReference>
<dbReference type="PANTHER" id="PTHR33867:SF1">
    <property type="entry name" value="RIBOSOME MATURATION FACTOR RIMP"/>
    <property type="match status" value="1"/>
</dbReference>
<dbReference type="Pfam" id="PF17384">
    <property type="entry name" value="DUF150_C"/>
    <property type="match status" value="1"/>
</dbReference>
<dbReference type="Pfam" id="PF02576">
    <property type="entry name" value="RimP_N"/>
    <property type="match status" value="1"/>
</dbReference>
<dbReference type="SUPFAM" id="SSF74942">
    <property type="entry name" value="YhbC-like, C-terminal domain"/>
    <property type="match status" value="1"/>
</dbReference>
<dbReference type="SUPFAM" id="SSF75420">
    <property type="entry name" value="YhbC-like, N-terminal domain"/>
    <property type="match status" value="1"/>
</dbReference>
<feature type="chain" id="PRO_1000149790" description="Ribosome maturation factor RimP">
    <location>
        <begin position="1"/>
        <end position="154"/>
    </location>
</feature>
<organism>
    <name type="scientific">Cyanothece sp. (strain PCC 7425 / ATCC 29141)</name>
    <dbReference type="NCBI Taxonomy" id="395961"/>
    <lineage>
        <taxon>Bacteria</taxon>
        <taxon>Bacillati</taxon>
        <taxon>Cyanobacteriota</taxon>
        <taxon>Cyanophyceae</taxon>
        <taxon>Gomontiellales</taxon>
        <taxon>Cyanothecaceae</taxon>
        <taxon>Cyanothece</taxon>
    </lineage>
</organism>
<protein>
    <recommendedName>
        <fullName evidence="1">Ribosome maturation factor RimP</fullName>
    </recommendedName>
</protein>
<sequence>MTHPLIPEILDLAVPLAADLNLEVVGAVFHTHLNPPVLRVDIRNLSADTSLEDCERMSHRLETALDAADLVAGTYVLEVSSPGISRLLSSDREFVSFRGFSVIVRTREPIAGQREWVGNLVQRDEEFVYLNQKGRAISIPRHLVTQVQLNEKRS</sequence>
<evidence type="ECO:0000255" key="1">
    <source>
        <dbReference type="HAMAP-Rule" id="MF_01077"/>
    </source>
</evidence>
<keyword id="KW-0963">Cytoplasm</keyword>
<keyword id="KW-0690">Ribosome biogenesis</keyword>
<name>RIMP_CYAP4</name>
<reference key="1">
    <citation type="journal article" date="2011" name="MBio">
        <title>Novel metabolic attributes of the genus Cyanothece, comprising a group of unicellular nitrogen-fixing Cyanobacteria.</title>
        <authorList>
            <person name="Bandyopadhyay A."/>
            <person name="Elvitigala T."/>
            <person name="Welsh E."/>
            <person name="Stockel J."/>
            <person name="Liberton M."/>
            <person name="Min H."/>
            <person name="Sherman L.A."/>
            <person name="Pakrasi H.B."/>
        </authorList>
    </citation>
    <scope>NUCLEOTIDE SEQUENCE [LARGE SCALE GENOMIC DNA]</scope>
    <source>
        <strain>PCC 7425 / ATCC 29141</strain>
    </source>
</reference>
<comment type="function">
    <text evidence="1">Required for maturation of 30S ribosomal subunits.</text>
</comment>
<comment type="subcellular location">
    <subcellularLocation>
        <location evidence="1">Cytoplasm</location>
    </subcellularLocation>
</comment>
<comment type="similarity">
    <text evidence="1">Belongs to the RimP family.</text>
</comment>
<gene>
    <name evidence="1" type="primary">rimP</name>
    <name type="ordered locus">Cyan7425_2088</name>
</gene>
<proteinExistence type="inferred from homology"/>